<proteinExistence type="evidence at protein level"/>
<name>TRPA_THET2</name>
<feature type="chain" id="PRO_0000098865" description="Tryptophan synthase alpha chain">
    <location>
        <begin position="1"/>
        <end position="271"/>
    </location>
</feature>
<feature type="active site" description="Proton acceptor" evidence="1">
    <location>
        <position position="47"/>
    </location>
</feature>
<feature type="active site" description="Proton acceptor" evidence="1">
    <location>
        <position position="58"/>
    </location>
</feature>
<feature type="sequence conflict" description="In Ref. 1; AAA27509." evidence="2" ref="1">
    <original>V</original>
    <variation>S</variation>
    <location>
        <position position="171"/>
    </location>
</feature>
<feature type="helix" evidence="3">
    <location>
        <begin position="3"/>
        <end position="12"/>
    </location>
</feature>
<feature type="strand" evidence="3">
    <location>
        <begin position="17"/>
        <end position="23"/>
    </location>
</feature>
<feature type="helix" evidence="3">
    <location>
        <begin position="29"/>
        <end position="39"/>
    </location>
</feature>
<feature type="helix" evidence="3">
    <location>
        <begin position="40"/>
        <end position="42"/>
    </location>
</feature>
<feature type="strand" evidence="3">
    <location>
        <begin position="44"/>
        <end position="49"/>
    </location>
</feature>
<feature type="helix" evidence="3">
    <location>
        <begin position="60"/>
        <end position="71"/>
    </location>
</feature>
<feature type="helix" evidence="3">
    <location>
        <begin position="76"/>
        <end position="89"/>
    </location>
</feature>
<feature type="strand" evidence="3">
    <location>
        <begin position="94"/>
        <end position="97"/>
    </location>
</feature>
<feature type="helix" evidence="3">
    <location>
        <begin position="100"/>
        <end position="106"/>
    </location>
</feature>
<feature type="helix" evidence="3">
    <location>
        <begin position="108"/>
        <end position="118"/>
    </location>
</feature>
<feature type="strand" evidence="3">
    <location>
        <begin position="122"/>
        <end position="124"/>
    </location>
</feature>
<feature type="helix" evidence="3">
    <location>
        <begin position="130"/>
        <end position="132"/>
    </location>
</feature>
<feature type="helix" evidence="3">
    <location>
        <begin position="134"/>
        <end position="143"/>
    </location>
</feature>
<feature type="strand" evidence="3">
    <location>
        <begin position="146"/>
        <end position="148"/>
    </location>
</feature>
<feature type="helix" evidence="3">
    <location>
        <begin position="157"/>
        <end position="164"/>
    </location>
</feature>
<feature type="strand" evidence="3">
    <location>
        <begin position="171"/>
        <end position="174"/>
    </location>
</feature>
<feature type="helix" evidence="3">
    <location>
        <begin position="191"/>
        <end position="198"/>
    </location>
</feature>
<feature type="strand" evidence="3">
    <location>
        <begin position="205"/>
        <end position="209"/>
    </location>
</feature>
<feature type="helix" evidence="3">
    <location>
        <begin position="214"/>
        <end position="220"/>
    </location>
</feature>
<feature type="strand" evidence="3">
    <location>
        <begin position="223"/>
        <end position="228"/>
    </location>
</feature>
<feature type="helix" evidence="3">
    <location>
        <begin position="230"/>
        <end position="237"/>
    </location>
</feature>
<feature type="helix" evidence="3">
    <location>
        <begin position="242"/>
        <end position="253"/>
    </location>
</feature>
<organism>
    <name type="scientific">Thermus thermophilus (strain ATCC BAA-163 / DSM 7039 / HB27)</name>
    <dbReference type="NCBI Taxonomy" id="262724"/>
    <lineage>
        <taxon>Bacteria</taxon>
        <taxon>Thermotogati</taxon>
        <taxon>Deinococcota</taxon>
        <taxon>Deinococci</taxon>
        <taxon>Thermales</taxon>
        <taxon>Thermaceae</taxon>
        <taxon>Thermus</taxon>
    </lineage>
</organism>
<sequence>MTTLEAFAKARSEGRAALIPYLTAGFPSREGFLQAVEEVLPYADLLEIGLPYSDPLGDGPVIQRASELALRKGMSVQGALELVREVRALTEKPLFLMTYLNPVLAWGPERFFGLFKQAGATGVILPDLPPDEDPGLVRLAQEIGLETVFLLAPTSTDARIATVVRHATGFVYAVSVTGVTGMRERLPEEVKDLVRRIKARTALPVAVGFGVSGKATAAQAAVADGVVVGSALVRALEEGRSLAPLLQEIRQGLQRLEANPGLKESSKKPLS</sequence>
<reference key="1">
    <citation type="journal article" date="1990" name="J. Bacteriol.">
        <title>Cloning and sequence analysis of tryptophan synthetase genes of an extreme thermophile, Thermus thermophilus HB27: plasmid transfer from replica-plated Escherichia coli recombinant colonies to competent T. thermophilus cells.</title>
        <authorList>
            <person name="Koyama Y."/>
            <person name="Furukawa K."/>
        </authorList>
    </citation>
    <scope>NUCLEOTIDE SEQUENCE [GENOMIC DNA]</scope>
</reference>
<reference key="2">
    <citation type="journal article" date="2004" name="Nat. Biotechnol.">
        <title>The genome sequence of the extreme thermophile Thermus thermophilus.</title>
        <authorList>
            <person name="Henne A."/>
            <person name="Brueggemann H."/>
            <person name="Raasch C."/>
            <person name="Wiezer A."/>
            <person name="Hartsch T."/>
            <person name="Liesegang H."/>
            <person name="Johann A."/>
            <person name="Lienard T."/>
            <person name="Gohl O."/>
            <person name="Martinez-Arias R."/>
            <person name="Jacobi C."/>
            <person name="Starkuviene V."/>
            <person name="Schlenczeck S."/>
            <person name="Dencker S."/>
            <person name="Huber R."/>
            <person name="Klenk H.-P."/>
            <person name="Kramer W."/>
            <person name="Merkl R."/>
            <person name="Gottschalk G."/>
            <person name="Fritz H.-J."/>
        </authorList>
    </citation>
    <scope>NUCLEOTIDE SEQUENCE [LARGE SCALE GENOMIC DNA]</scope>
    <source>
        <strain>ATCC BAA-163 / DSM 7039 / HB27</strain>
    </source>
</reference>
<accession>P16608</accession>
<evidence type="ECO:0000255" key="1">
    <source>
        <dbReference type="HAMAP-Rule" id="MF_00131"/>
    </source>
</evidence>
<evidence type="ECO:0000305" key="2"/>
<evidence type="ECO:0007829" key="3">
    <source>
        <dbReference type="PDB" id="1UJP"/>
    </source>
</evidence>
<dbReference type="EC" id="4.2.1.20" evidence="1"/>
<dbReference type="EMBL" id="M32108">
    <property type="protein sequence ID" value="AAA27509.1"/>
    <property type="molecule type" value="Genomic_DNA"/>
</dbReference>
<dbReference type="EMBL" id="AE017221">
    <property type="protein sequence ID" value="AAS81077.1"/>
    <property type="molecule type" value="Genomic_DNA"/>
</dbReference>
<dbReference type="PIR" id="B35407">
    <property type="entry name" value="B35407"/>
</dbReference>
<dbReference type="RefSeq" id="WP_011173168.1">
    <property type="nucleotide sequence ID" value="NC_005835.1"/>
</dbReference>
<dbReference type="PDB" id="1UJP">
    <property type="method" value="X-ray"/>
    <property type="resolution" value="1.34 A"/>
    <property type="chains" value="A=1-270"/>
</dbReference>
<dbReference type="PDB" id="1WXJ">
    <property type="method" value="X-ray"/>
    <property type="resolution" value="1.70 A"/>
    <property type="chains" value="A=1-270"/>
</dbReference>
<dbReference type="PDBsum" id="1UJP"/>
<dbReference type="PDBsum" id="1WXJ"/>
<dbReference type="SMR" id="P16608"/>
<dbReference type="DrugBank" id="DB03171">
    <property type="generic name" value="Indole-3-Propanol Phosphate"/>
</dbReference>
<dbReference type="KEGG" id="tth:TT_C0729"/>
<dbReference type="eggNOG" id="COG0159">
    <property type="taxonomic scope" value="Bacteria"/>
</dbReference>
<dbReference type="HOGENOM" id="CLU_016734_0_0_0"/>
<dbReference type="OrthoDB" id="9804578at2"/>
<dbReference type="UniPathway" id="UPA00035">
    <property type="reaction ID" value="UER00044"/>
</dbReference>
<dbReference type="EvolutionaryTrace" id="P16608"/>
<dbReference type="Proteomes" id="UP000000592">
    <property type="component" value="Chromosome"/>
</dbReference>
<dbReference type="GO" id="GO:0005829">
    <property type="term" value="C:cytosol"/>
    <property type="evidence" value="ECO:0007669"/>
    <property type="project" value="TreeGrafter"/>
</dbReference>
<dbReference type="GO" id="GO:0004834">
    <property type="term" value="F:tryptophan synthase activity"/>
    <property type="evidence" value="ECO:0007669"/>
    <property type="project" value="UniProtKB-UniRule"/>
</dbReference>
<dbReference type="CDD" id="cd04724">
    <property type="entry name" value="Tryptophan_synthase_alpha"/>
    <property type="match status" value="1"/>
</dbReference>
<dbReference type="FunFam" id="3.20.20.70:FF:000037">
    <property type="entry name" value="Tryptophan synthase alpha chain"/>
    <property type="match status" value="1"/>
</dbReference>
<dbReference type="Gene3D" id="3.20.20.70">
    <property type="entry name" value="Aldolase class I"/>
    <property type="match status" value="1"/>
</dbReference>
<dbReference type="HAMAP" id="MF_00131">
    <property type="entry name" value="Trp_synth_alpha"/>
    <property type="match status" value="1"/>
</dbReference>
<dbReference type="InterPro" id="IPR013785">
    <property type="entry name" value="Aldolase_TIM"/>
</dbReference>
<dbReference type="InterPro" id="IPR011060">
    <property type="entry name" value="RibuloseP-bd_barrel"/>
</dbReference>
<dbReference type="InterPro" id="IPR018204">
    <property type="entry name" value="Trp_synthase_alpha_AS"/>
</dbReference>
<dbReference type="InterPro" id="IPR002028">
    <property type="entry name" value="Trp_synthase_suA"/>
</dbReference>
<dbReference type="NCBIfam" id="TIGR00262">
    <property type="entry name" value="trpA"/>
    <property type="match status" value="1"/>
</dbReference>
<dbReference type="PANTHER" id="PTHR43406:SF1">
    <property type="entry name" value="TRYPTOPHAN SYNTHASE ALPHA CHAIN, CHLOROPLASTIC"/>
    <property type="match status" value="1"/>
</dbReference>
<dbReference type="PANTHER" id="PTHR43406">
    <property type="entry name" value="TRYPTOPHAN SYNTHASE, ALPHA CHAIN"/>
    <property type="match status" value="1"/>
</dbReference>
<dbReference type="Pfam" id="PF00290">
    <property type="entry name" value="Trp_syntA"/>
    <property type="match status" value="1"/>
</dbReference>
<dbReference type="SUPFAM" id="SSF51366">
    <property type="entry name" value="Ribulose-phoshate binding barrel"/>
    <property type="match status" value="1"/>
</dbReference>
<dbReference type="PROSITE" id="PS00167">
    <property type="entry name" value="TRP_SYNTHASE_ALPHA"/>
    <property type="match status" value="1"/>
</dbReference>
<gene>
    <name evidence="1" type="primary">trpA</name>
    <name type="ordered locus">TT_C0729</name>
</gene>
<protein>
    <recommendedName>
        <fullName evidence="1">Tryptophan synthase alpha chain</fullName>
        <ecNumber evidence="1">4.2.1.20</ecNumber>
    </recommendedName>
</protein>
<comment type="function">
    <text evidence="1">The alpha subunit is responsible for the aldol cleavage of indoleglycerol phosphate to indole and glyceraldehyde 3-phosphate.</text>
</comment>
<comment type="catalytic activity">
    <reaction evidence="1">
        <text>(1S,2R)-1-C-(indol-3-yl)glycerol 3-phosphate + L-serine = D-glyceraldehyde 3-phosphate + L-tryptophan + H2O</text>
        <dbReference type="Rhea" id="RHEA:10532"/>
        <dbReference type="ChEBI" id="CHEBI:15377"/>
        <dbReference type="ChEBI" id="CHEBI:33384"/>
        <dbReference type="ChEBI" id="CHEBI:57912"/>
        <dbReference type="ChEBI" id="CHEBI:58866"/>
        <dbReference type="ChEBI" id="CHEBI:59776"/>
        <dbReference type="EC" id="4.2.1.20"/>
    </reaction>
</comment>
<comment type="pathway">
    <text evidence="1">Amino-acid biosynthesis; L-tryptophan biosynthesis; L-tryptophan from chorismate: step 5/5.</text>
</comment>
<comment type="subunit">
    <text evidence="1">Tetramer of two alpha and two beta chains.</text>
</comment>
<comment type="similarity">
    <text evidence="1">Belongs to the TrpA family.</text>
</comment>
<keyword id="KW-0002">3D-structure</keyword>
<keyword id="KW-0028">Amino-acid biosynthesis</keyword>
<keyword id="KW-0057">Aromatic amino acid biosynthesis</keyword>
<keyword id="KW-0456">Lyase</keyword>
<keyword id="KW-0822">Tryptophan biosynthesis</keyword>